<gene>
    <name type="ordered locus">slr1764</name>
</gene>
<protein>
    <recommendedName>
        <fullName>Uncharacterized protein slr1764</fullName>
    </recommendedName>
</protein>
<keyword id="KW-1185">Reference proteome</keyword>
<organism>
    <name type="scientific">Synechocystis sp. (strain ATCC 27184 / PCC 6803 / Kazusa)</name>
    <dbReference type="NCBI Taxonomy" id="1111708"/>
    <lineage>
        <taxon>Bacteria</taxon>
        <taxon>Bacillati</taxon>
        <taxon>Cyanobacteriota</taxon>
        <taxon>Cyanophyceae</taxon>
        <taxon>Synechococcales</taxon>
        <taxon>Merismopediaceae</taxon>
        <taxon>Synechocystis</taxon>
    </lineage>
</organism>
<sequence length="179" mass="19423">MLSLEKGQSLSLTKPDGSSIQKVRVGLSWDVASIGSNVDLDLFVVHKESKKVAFFNDKTAISGIKLSDDNLTGEGEGDDEFTELDATKTDDGDYYICVNIYDAKSRKQAFNLVNNAKATIYNNETNTALASYSITEDGGQNTGIIVAKLKDVGGSYEFTALGEYIVGDINEIAQVVFRK</sequence>
<evidence type="ECO:0000305" key="1"/>
<name>Y1764_SYNY3</name>
<accession>P73042</accession>
<reference key="1">
    <citation type="journal article" date="1996" name="DNA Res.">
        <title>Sequence analysis of the genome of the unicellular cyanobacterium Synechocystis sp. strain PCC6803. II. Sequence determination of the entire genome and assignment of potential protein-coding regions.</title>
        <authorList>
            <person name="Kaneko T."/>
            <person name="Sato S."/>
            <person name="Kotani H."/>
            <person name="Tanaka A."/>
            <person name="Asamizu E."/>
            <person name="Nakamura Y."/>
            <person name="Miyajima N."/>
            <person name="Hirosawa M."/>
            <person name="Sugiura M."/>
            <person name="Sasamoto S."/>
            <person name="Kimura T."/>
            <person name="Hosouchi T."/>
            <person name="Matsuno A."/>
            <person name="Muraki A."/>
            <person name="Nakazaki N."/>
            <person name="Naruo K."/>
            <person name="Okumura S."/>
            <person name="Shimpo S."/>
            <person name="Takeuchi C."/>
            <person name="Wada T."/>
            <person name="Watanabe A."/>
            <person name="Yamada M."/>
            <person name="Yasuda M."/>
            <person name="Tabata S."/>
        </authorList>
    </citation>
    <scope>NUCLEOTIDE SEQUENCE [LARGE SCALE GENOMIC DNA]</scope>
    <source>
        <strain>ATCC 27184 / PCC 6803 / Kazusa</strain>
    </source>
</reference>
<comment type="similarity">
    <text evidence="1">Belongs to the CAPAB/TerDEXZ family.</text>
</comment>
<dbReference type="EMBL" id="BA000022">
    <property type="protein sequence ID" value="BAA17063.1"/>
    <property type="molecule type" value="Genomic_DNA"/>
</dbReference>
<dbReference type="PIR" id="S75149">
    <property type="entry name" value="S75149"/>
</dbReference>
<dbReference type="SMR" id="P73042"/>
<dbReference type="FunCoup" id="P73042">
    <property type="interactions" value="3"/>
</dbReference>
<dbReference type="STRING" id="1148.gene:10497924"/>
<dbReference type="PaxDb" id="1148-1652139"/>
<dbReference type="EnsemblBacteria" id="BAA17063">
    <property type="protein sequence ID" value="BAA17063"/>
    <property type="gene ID" value="BAA17063"/>
</dbReference>
<dbReference type="KEGG" id="syn:slr1764"/>
<dbReference type="eggNOG" id="COG2310">
    <property type="taxonomic scope" value="Bacteria"/>
</dbReference>
<dbReference type="InParanoid" id="P73042"/>
<dbReference type="PhylomeDB" id="P73042"/>
<dbReference type="Proteomes" id="UP000001425">
    <property type="component" value="Chromosome"/>
</dbReference>
<dbReference type="CDD" id="cd06974">
    <property type="entry name" value="TerD_like"/>
    <property type="match status" value="1"/>
</dbReference>
<dbReference type="Gene3D" id="2.60.60.30">
    <property type="entry name" value="sav2460 like domains"/>
    <property type="match status" value="1"/>
</dbReference>
<dbReference type="InterPro" id="IPR051324">
    <property type="entry name" value="Stress/Tellurium_Resist"/>
</dbReference>
<dbReference type="InterPro" id="IPR003325">
    <property type="entry name" value="TerD"/>
</dbReference>
<dbReference type="PANTHER" id="PTHR32097">
    <property type="entry name" value="CAMP-BINDING PROTEIN 1-RELATED"/>
    <property type="match status" value="1"/>
</dbReference>
<dbReference type="PANTHER" id="PTHR32097:SF4">
    <property type="entry name" value="GENERAL STRESS PROTEIN 16U"/>
    <property type="match status" value="1"/>
</dbReference>
<dbReference type="Pfam" id="PF02342">
    <property type="entry name" value="TerD"/>
    <property type="match status" value="1"/>
</dbReference>
<proteinExistence type="inferred from homology"/>
<feature type="chain" id="PRO_0000170786" description="Uncharacterized protein slr1764">
    <location>
        <begin position="1"/>
        <end position="179"/>
    </location>
</feature>